<comment type="function">
    <text>Involved in the presentation of foreign antigens to the immune system.</text>
</comment>
<comment type="subunit">
    <text>Heterodimer of an alpha chain and a beta chain (beta-2-microglobulin).</text>
</comment>
<comment type="interaction">
    <interactant intactId="EBI-3197925">
        <id>P01893</id>
    </interactant>
    <interactant intactId="EBI-351896">
        <id>P11142</id>
        <label>HSPA8</label>
    </interactant>
    <organismsDiffer>false</organismsDiffer>
    <experiments>2</experiments>
</comment>
<comment type="subcellular location">
    <subcellularLocation>
        <location evidence="5">Cell membrane</location>
        <topology evidence="5">Single-pass membrane protein</topology>
    </subcellularLocation>
</comment>
<comment type="similarity">
    <text evidence="5">Belongs to the MHC class I family.</text>
</comment>
<comment type="caution">
    <text evidence="5">Could be the product of a pseudogene.</text>
</comment>
<comment type="sequence caution" evidence="5">
    <conflict type="erroneous initiation">
        <sequence resource="EMBL-CDS" id="AAA36218"/>
    </conflict>
    <text>Truncated N-terminus.</text>
</comment>
<evidence type="ECO:0000250" key="1"/>
<evidence type="ECO:0000255" key="2"/>
<evidence type="ECO:0000255" key="3">
    <source>
        <dbReference type="PROSITE-ProRule" id="PRU00114"/>
    </source>
</evidence>
<evidence type="ECO:0000256" key="4">
    <source>
        <dbReference type="SAM" id="MobiDB-lite"/>
    </source>
</evidence>
<evidence type="ECO:0000305" key="5"/>
<organism>
    <name type="scientific">Homo sapiens</name>
    <name type="common">Human</name>
    <dbReference type="NCBI Taxonomy" id="9606"/>
    <lineage>
        <taxon>Eukaryota</taxon>
        <taxon>Metazoa</taxon>
        <taxon>Chordata</taxon>
        <taxon>Craniata</taxon>
        <taxon>Vertebrata</taxon>
        <taxon>Euteleostomi</taxon>
        <taxon>Mammalia</taxon>
        <taxon>Eutheria</taxon>
        <taxon>Euarchontoglires</taxon>
        <taxon>Primates</taxon>
        <taxon>Haplorrhini</taxon>
        <taxon>Catarrhini</taxon>
        <taxon>Hominidae</taxon>
        <taxon>Homo</taxon>
    </lineage>
</organism>
<keyword id="KW-1003">Cell membrane</keyword>
<keyword id="KW-1015">Disulfide bond</keyword>
<keyword id="KW-0325">Glycoprotein</keyword>
<keyword id="KW-0391">Immunity</keyword>
<keyword id="KW-0472">Membrane</keyword>
<keyword id="KW-0490">MHC I</keyword>
<keyword id="KW-1267">Proteomics identification</keyword>
<keyword id="KW-1185">Reference proteome</keyword>
<keyword id="KW-0732">Signal</keyword>
<keyword id="KW-0812">Transmembrane</keyword>
<keyword id="KW-1133">Transmembrane helix</keyword>
<name>HLAH_HUMAN</name>
<sequence>MVLMAPRTLLLLLSGALALTQTWARSHSMRYFYTTMSRPGAGEPRFISVGYVDDTQFVRFDSDDASPREEPRAPWMEREGPKYWDRNTQICKAQAQTERENLRIALRYYNQSEGGSHTMQVMYGCDVGPDGPFLRGYEQHAYDGKDYIALNEDLRSWTAADMAAQITKRKWEAARRAEQRRVYLEGEFVEWLRRYLENGKETLQRADPPKTHMTHHPISDHEATLRCWALGFYPAEITLTWQRDGEDQTQDTELVETRPAGDGTFQKWAAVVVPSGEEQRYTCHVQHEGLPEPLTLRWEPSSQPTVPIVGIVAGLVLLVAVVTGAVVAAVMWRKKSSDRKGGSYSQAASSNSAQGSDVSLTA</sequence>
<reference key="1">
    <citation type="journal article" date="1982" name="Proc. Natl. Acad. Sci. U.S.A.">
        <title>Exon/intron organization and complete nucleotide sequence of an HLA gene.</title>
        <authorList>
            <person name="Malissen M."/>
            <person name="Malissen B."/>
            <person name="Jordan B.R."/>
        </authorList>
    </citation>
    <scope>NUCLEOTIDE SEQUENCE [GENOMIC DNA]</scope>
</reference>
<proteinExistence type="uncertain"/>
<accession>P01893</accession>
<feature type="signal peptide" evidence="2">
    <location>
        <begin position="1"/>
        <end position="24"/>
    </location>
</feature>
<feature type="chain" id="PRO_0000018888" description="Putative HLA class I histocompatibility antigen, alpha chain H">
    <location>
        <begin position="25"/>
        <end position="362"/>
    </location>
</feature>
<feature type="topological domain" description="Extracellular" evidence="2">
    <location>
        <begin position="25"/>
        <end position="308"/>
    </location>
</feature>
<feature type="transmembrane region" description="Helical" evidence="2">
    <location>
        <begin position="309"/>
        <end position="332"/>
    </location>
</feature>
<feature type="topological domain" description="Cytoplasmic" evidence="2">
    <location>
        <begin position="333"/>
        <end position="362"/>
    </location>
</feature>
<feature type="domain" description="Ig-like C1-type">
    <location>
        <begin position="209"/>
        <end position="297"/>
    </location>
</feature>
<feature type="region of interest" description="Alpha-1">
    <location>
        <begin position="25"/>
        <end position="114"/>
    </location>
</feature>
<feature type="region of interest" description="Alpha-2">
    <location>
        <begin position="115"/>
        <end position="206"/>
    </location>
</feature>
<feature type="region of interest" description="Alpha-3">
    <location>
        <begin position="207"/>
        <end position="298"/>
    </location>
</feature>
<feature type="region of interest" description="Connecting peptide">
    <location>
        <begin position="299"/>
        <end position="308"/>
    </location>
</feature>
<feature type="region of interest" description="Disordered" evidence="4">
    <location>
        <begin position="337"/>
        <end position="362"/>
    </location>
</feature>
<feature type="compositionally biased region" description="Low complexity" evidence="4">
    <location>
        <begin position="342"/>
        <end position="356"/>
    </location>
</feature>
<feature type="glycosylation site" description="N-linked (GlcNAc...) asparagine" evidence="1">
    <location>
        <position position="110"/>
    </location>
</feature>
<feature type="disulfide bond" evidence="3">
    <location>
        <begin position="227"/>
        <end position="283"/>
    </location>
</feature>
<gene>
    <name type="primary">HLA-H</name>
    <name type="synonym">HLAH</name>
</gene>
<dbReference type="EMBL" id="J00191">
    <property type="protein sequence ID" value="AAA36218.1"/>
    <property type="status" value="ALT_INIT"/>
    <property type="molecule type" value="Genomic_DNA"/>
</dbReference>
<dbReference type="PIR" id="A02189">
    <property type="entry name" value="HLHU12"/>
</dbReference>
<dbReference type="SMR" id="P01893"/>
<dbReference type="FunCoup" id="P01893">
    <property type="interactions" value="289"/>
</dbReference>
<dbReference type="IntAct" id="P01893">
    <property type="interactions" value="15"/>
</dbReference>
<dbReference type="MINT" id="P01893"/>
<dbReference type="GlyCosmos" id="P01893">
    <property type="glycosylation" value="1 site, No reported glycans"/>
</dbReference>
<dbReference type="GlyGen" id="P01893">
    <property type="glycosylation" value="2 sites, 1 O-linked glycan (1 site)"/>
</dbReference>
<dbReference type="iPTMnet" id="P01893"/>
<dbReference type="PhosphoSitePlus" id="P01893"/>
<dbReference type="SwissPalm" id="P01893"/>
<dbReference type="BioMuta" id="HGNC:4965"/>
<dbReference type="jPOST" id="P01893"/>
<dbReference type="MassIVE" id="P01893"/>
<dbReference type="ProteomicsDB" id="51507"/>
<dbReference type="Pumba" id="P01893"/>
<dbReference type="AGR" id="HGNC:4965"/>
<dbReference type="GeneCards" id="HLA-H"/>
<dbReference type="HGNC" id="HGNC:4965">
    <property type="gene designation" value="HLA-H"/>
</dbReference>
<dbReference type="MIM" id="142800">
    <property type="type" value="gene"/>
</dbReference>
<dbReference type="neXtProt" id="NX_P01893"/>
<dbReference type="InParanoid" id="P01893"/>
<dbReference type="PAN-GO" id="P01893">
    <property type="GO annotations" value="8 GO annotations based on evolutionary models"/>
</dbReference>
<dbReference type="PhylomeDB" id="P01893"/>
<dbReference type="PathwayCommons" id="P01893"/>
<dbReference type="Reactome" id="R-HSA-1236974">
    <property type="pathway name" value="ER-Phagosome pathway"/>
</dbReference>
<dbReference type="Reactome" id="R-HSA-1236977">
    <property type="pathway name" value="Endosomal/Vacuolar pathway"/>
</dbReference>
<dbReference type="Reactome" id="R-HSA-198933">
    <property type="pathway name" value="Immunoregulatory interactions between a Lymphoid and a non-Lymphoid cell"/>
</dbReference>
<dbReference type="Reactome" id="R-HSA-6798695">
    <property type="pathway name" value="Neutrophil degranulation"/>
</dbReference>
<dbReference type="Reactome" id="R-HSA-877300">
    <property type="pathway name" value="Interferon gamma signaling"/>
</dbReference>
<dbReference type="Reactome" id="R-HSA-909733">
    <property type="pathway name" value="Interferon alpha/beta signaling"/>
</dbReference>
<dbReference type="Reactome" id="R-HSA-9705671">
    <property type="pathway name" value="SARS-CoV-2 activates/modulates innate and adaptive immune responses"/>
</dbReference>
<dbReference type="Reactome" id="R-HSA-983170">
    <property type="pathway name" value="Antigen Presentation: Folding, assembly and peptide loading of class I MHC"/>
</dbReference>
<dbReference type="SignaLink" id="P01893"/>
<dbReference type="ChiTaRS" id="HLA-H">
    <property type="organism name" value="human"/>
</dbReference>
<dbReference type="Pharos" id="P01893">
    <property type="development level" value="Tbio"/>
</dbReference>
<dbReference type="PRO" id="PR:P01893"/>
<dbReference type="Proteomes" id="UP000005640">
    <property type="component" value="Unplaced"/>
</dbReference>
<dbReference type="RNAct" id="P01893">
    <property type="molecule type" value="protein"/>
</dbReference>
<dbReference type="GO" id="GO:0035577">
    <property type="term" value="C:azurophil granule membrane"/>
    <property type="evidence" value="ECO:0000304"/>
    <property type="project" value="Reactome"/>
</dbReference>
<dbReference type="GO" id="GO:0009986">
    <property type="term" value="C:cell surface"/>
    <property type="evidence" value="ECO:0000315"/>
    <property type="project" value="UniProtKB"/>
</dbReference>
<dbReference type="GO" id="GO:0031901">
    <property type="term" value="C:early endosome membrane"/>
    <property type="evidence" value="ECO:0000304"/>
    <property type="project" value="Reactome"/>
</dbReference>
<dbReference type="GO" id="GO:0012507">
    <property type="term" value="C:ER to Golgi transport vesicle membrane"/>
    <property type="evidence" value="ECO:0000304"/>
    <property type="project" value="Reactome"/>
</dbReference>
<dbReference type="GO" id="GO:0009897">
    <property type="term" value="C:external side of plasma membrane"/>
    <property type="evidence" value="ECO:0000318"/>
    <property type="project" value="GO_Central"/>
</dbReference>
<dbReference type="GO" id="GO:0005615">
    <property type="term" value="C:extracellular space"/>
    <property type="evidence" value="ECO:0000318"/>
    <property type="project" value="GO_Central"/>
</dbReference>
<dbReference type="GO" id="GO:0000139">
    <property type="term" value="C:Golgi membrane"/>
    <property type="evidence" value="ECO:0000304"/>
    <property type="project" value="Reactome"/>
</dbReference>
<dbReference type="GO" id="GO:0098553">
    <property type="term" value="C:lumenal side of endoplasmic reticulum membrane"/>
    <property type="evidence" value="ECO:0000304"/>
    <property type="project" value="Reactome"/>
</dbReference>
<dbReference type="GO" id="GO:0042612">
    <property type="term" value="C:MHC class I protein complex"/>
    <property type="evidence" value="ECO:0007669"/>
    <property type="project" value="UniProtKB-KW"/>
</dbReference>
<dbReference type="GO" id="GO:0030670">
    <property type="term" value="C:phagocytic vesicle membrane"/>
    <property type="evidence" value="ECO:0000304"/>
    <property type="project" value="Reactome"/>
</dbReference>
<dbReference type="GO" id="GO:0005886">
    <property type="term" value="C:plasma membrane"/>
    <property type="evidence" value="ECO:0000304"/>
    <property type="project" value="Reactome"/>
</dbReference>
<dbReference type="GO" id="GO:0055038">
    <property type="term" value="C:recycling endosome membrane"/>
    <property type="evidence" value="ECO:0000304"/>
    <property type="project" value="Reactome"/>
</dbReference>
<dbReference type="GO" id="GO:0030881">
    <property type="term" value="F:beta-2-microglobulin binding"/>
    <property type="evidence" value="ECO:0000315"/>
    <property type="project" value="UniProtKB"/>
</dbReference>
<dbReference type="GO" id="GO:0042605">
    <property type="term" value="F:peptide antigen binding"/>
    <property type="evidence" value="ECO:0000318"/>
    <property type="project" value="GO_Central"/>
</dbReference>
<dbReference type="GO" id="GO:0005102">
    <property type="term" value="F:signaling receptor binding"/>
    <property type="evidence" value="ECO:0000318"/>
    <property type="project" value="GO_Central"/>
</dbReference>
<dbReference type="GO" id="GO:0002486">
    <property type="term" value="P:antigen processing and presentation of endogenous peptide antigen via MHC class I via ER pathway, TAP-independent"/>
    <property type="evidence" value="ECO:0000318"/>
    <property type="project" value="GO_Central"/>
</dbReference>
<dbReference type="GO" id="GO:0002476">
    <property type="term" value="P:antigen processing and presentation of endogenous peptide antigen via MHC class Ib"/>
    <property type="evidence" value="ECO:0000318"/>
    <property type="project" value="GO_Central"/>
</dbReference>
<dbReference type="GO" id="GO:0006955">
    <property type="term" value="P:immune response"/>
    <property type="evidence" value="ECO:0000318"/>
    <property type="project" value="GO_Central"/>
</dbReference>
<dbReference type="GO" id="GO:0001916">
    <property type="term" value="P:positive regulation of T cell mediated cytotoxicity"/>
    <property type="evidence" value="ECO:0000318"/>
    <property type="project" value="GO_Central"/>
</dbReference>
<dbReference type="CDD" id="cd21026">
    <property type="entry name" value="IgC1_MHC_Ia_HLA-B"/>
    <property type="match status" value="1"/>
</dbReference>
<dbReference type="FunFam" id="2.60.40.10:FF:000014">
    <property type="entry name" value="H-2 class I histocompatibility antigen, alpha chain"/>
    <property type="match status" value="1"/>
</dbReference>
<dbReference type="FunFam" id="3.30.500.10:FF:000001">
    <property type="entry name" value="H-2 class I histocompatibility antigen, alpha chain"/>
    <property type="match status" value="1"/>
</dbReference>
<dbReference type="Gene3D" id="2.60.40.10">
    <property type="entry name" value="Immunoglobulins"/>
    <property type="match status" value="1"/>
</dbReference>
<dbReference type="Gene3D" id="3.30.500.10">
    <property type="entry name" value="MHC class I-like antigen recognition-like"/>
    <property type="match status" value="1"/>
</dbReference>
<dbReference type="InterPro" id="IPR007110">
    <property type="entry name" value="Ig-like_dom"/>
</dbReference>
<dbReference type="InterPro" id="IPR036179">
    <property type="entry name" value="Ig-like_dom_sf"/>
</dbReference>
<dbReference type="InterPro" id="IPR013783">
    <property type="entry name" value="Ig-like_fold"/>
</dbReference>
<dbReference type="InterPro" id="IPR003006">
    <property type="entry name" value="Ig/MHC_CS"/>
</dbReference>
<dbReference type="InterPro" id="IPR003597">
    <property type="entry name" value="Ig_C1-set"/>
</dbReference>
<dbReference type="InterPro" id="IPR050208">
    <property type="entry name" value="MHC_class-I_related"/>
</dbReference>
<dbReference type="InterPro" id="IPR011161">
    <property type="entry name" value="MHC_I-like_Ag-recog"/>
</dbReference>
<dbReference type="InterPro" id="IPR037055">
    <property type="entry name" value="MHC_I-like_Ag-recog_sf"/>
</dbReference>
<dbReference type="InterPro" id="IPR011162">
    <property type="entry name" value="MHC_I/II-like_Ag-recog"/>
</dbReference>
<dbReference type="InterPro" id="IPR001039">
    <property type="entry name" value="MHC_I_a_a1/a2"/>
</dbReference>
<dbReference type="InterPro" id="IPR010579">
    <property type="entry name" value="MHC_I_a_C"/>
</dbReference>
<dbReference type="PANTHER" id="PTHR16675:SF256">
    <property type="entry name" value="HLA CLASS I HISTOCOMPATIBILITY ANTIGEN, ALPHA CHAIN H-RELATED"/>
    <property type="match status" value="1"/>
</dbReference>
<dbReference type="PANTHER" id="PTHR16675">
    <property type="entry name" value="MHC CLASS I-RELATED"/>
    <property type="match status" value="1"/>
</dbReference>
<dbReference type="Pfam" id="PF07654">
    <property type="entry name" value="C1-set"/>
    <property type="match status" value="1"/>
</dbReference>
<dbReference type="Pfam" id="PF00129">
    <property type="entry name" value="MHC_I"/>
    <property type="match status" value="1"/>
</dbReference>
<dbReference type="Pfam" id="PF06623">
    <property type="entry name" value="MHC_I_C"/>
    <property type="match status" value="1"/>
</dbReference>
<dbReference type="PRINTS" id="PR01638">
    <property type="entry name" value="MHCCLASSI"/>
</dbReference>
<dbReference type="SMART" id="SM00407">
    <property type="entry name" value="IGc1"/>
    <property type="match status" value="1"/>
</dbReference>
<dbReference type="SUPFAM" id="SSF48726">
    <property type="entry name" value="Immunoglobulin"/>
    <property type="match status" value="1"/>
</dbReference>
<dbReference type="SUPFAM" id="SSF54452">
    <property type="entry name" value="MHC antigen-recognition domain"/>
    <property type="match status" value="1"/>
</dbReference>
<dbReference type="PROSITE" id="PS50835">
    <property type="entry name" value="IG_LIKE"/>
    <property type="match status" value="1"/>
</dbReference>
<dbReference type="PROSITE" id="PS00290">
    <property type="entry name" value="IG_MHC"/>
    <property type="match status" value="1"/>
</dbReference>
<protein>
    <recommendedName>
        <fullName>Putative HLA class I histocompatibility antigen, alpha chain H</fullName>
    </recommendedName>
    <alternativeName>
        <fullName>HLA-12.4</fullName>
    </alternativeName>
    <alternativeName>
        <fullName>HLA-AR</fullName>
    </alternativeName>
    <alternativeName>
        <fullName>MHC class I antigen H</fullName>
    </alternativeName>
</protein>